<sequence>MATEQTILVGKKPTTNYVIATVMAFNAGVKKVVLKARGAAISKAVSTAVMVRDRFLPGKVQIKDIKLLSDKVQGQGGRERTVAAIEVVLEMA</sequence>
<name>ALBA_PYRAE</name>
<keyword id="KW-0007">Acetylation</keyword>
<keyword id="KW-0158">Chromosome</keyword>
<keyword id="KW-0963">Cytoplasm</keyword>
<keyword id="KW-0226">DNA condensation</keyword>
<keyword id="KW-0238">DNA-binding</keyword>
<keyword id="KW-1185">Reference proteome</keyword>
<accession>Q8ZVL3</accession>
<protein>
    <recommendedName>
        <fullName evidence="1">DNA/RNA-binding protein Alba</fullName>
    </recommendedName>
</protein>
<comment type="function">
    <text evidence="1">Binds double-stranded DNA tightly but without sequence specificity. Involved in DNA compaction.</text>
</comment>
<comment type="subcellular location">
    <subcellularLocation>
        <location evidence="1">Cytoplasm</location>
    </subcellularLocation>
    <subcellularLocation>
        <location evidence="1">Chromosome</location>
    </subcellularLocation>
</comment>
<comment type="PTM">
    <text evidence="1">Acetylated. Acetylation at Lys-11 decreases DNA-binding affinity.</text>
</comment>
<comment type="similarity">
    <text evidence="1">Belongs to the histone-like Alba family.</text>
</comment>
<dbReference type="EMBL" id="AE009441">
    <property type="protein sequence ID" value="AAL64043.1"/>
    <property type="molecule type" value="Genomic_DNA"/>
</dbReference>
<dbReference type="RefSeq" id="WP_011008511.1">
    <property type="nucleotide sequence ID" value="NC_003364.1"/>
</dbReference>
<dbReference type="SMR" id="Q8ZVL3"/>
<dbReference type="STRING" id="178306.PAE2226"/>
<dbReference type="EnsemblBacteria" id="AAL64043">
    <property type="protein sequence ID" value="AAL64043"/>
    <property type="gene ID" value="PAE2226"/>
</dbReference>
<dbReference type="GeneID" id="1464377"/>
<dbReference type="KEGG" id="pai:PAE2226"/>
<dbReference type="PATRIC" id="fig|178306.9.peg.1655"/>
<dbReference type="eggNOG" id="arCOG01753">
    <property type="taxonomic scope" value="Archaea"/>
</dbReference>
<dbReference type="HOGENOM" id="CLU_110989_1_0_2"/>
<dbReference type="InParanoid" id="Q8ZVL3"/>
<dbReference type="Proteomes" id="UP000002439">
    <property type="component" value="Chromosome"/>
</dbReference>
<dbReference type="GO" id="GO:0005694">
    <property type="term" value="C:chromosome"/>
    <property type="evidence" value="ECO:0007669"/>
    <property type="project" value="UniProtKB-SubCell"/>
</dbReference>
<dbReference type="GO" id="GO:0005737">
    <property type="term" value="C:cytoplasm"/>
    <property type="evidence" value="ECO:0007669"/>
    <property type="project" value="UniProtKB-SubCell"/>
</dbReference>
<dbReference type="GO" id="GO:0003690">
    <property type="term" value="F:double-stranded DNA binding"/>
    <property type="evidence" value="ECO:0007669"/>
    <property type="project" value="UniProtKB-UniRule"/>
</dbReference>
<dbReference type="GO" id="GO:0003723">
    <property type="term" value="F:RNA binding"/>
    <property type="evidence" value="ECO:0000318"/>
    <property type="project" value="GO_Central"/>
</dbReference>
<dbReference type="GO" id="GO:0030261">
    <property type="term" value="P:chromosome condensation"/>
    <property type="evidence" value="ECO:0007669"/>
    <property type="project" value="UniProtKB-KW"/>
</dbReference>
<dbReference type="Gene3D" id="3.30.110.20">
    <property type="entry name" value="Alba-like domain"/>
    <property type="match status" value="1"/>
</dbReference>
<dbReference type="HAMAP" id="MF_01122">
    <property type="entry name" value="AlbA"/>
    <property type="match status" value="1"/>
</dbReference>
<dbReference type="InterPro" id="IPR036882">
    <property type="entry name" value="Alba-like_dom_sf"/>
</dbReference>
<dbReference type="InterPro" id="IPR013795">
    <property type="entry name" value="DNA/RNA-bd_Alba"/>
</dbReference>
<dbReference type="InterPro" id="IPR002775">
    <property type="entry name" value="DNA/RNA-bd_Alba-like"/>
</dbReference>
<dbReference type="NCBIfam" id="TIGR00285">
    <property type="entry name" value="DNA-binding protein Alba"/>
    <property type="match status" value="1"/>
</dbReference>
<dbReference type="NCBIfam" id="NF003088">
    <property type="entry name" value="PRK04015.1"/>
    <property type="match status" value="1"/>
</dbReference>
<dbReference type="Pfam" id="PF01918">
    <property type="entry name" value="Alba"/>
    <property type="match status" value="1"/>
</dbReference>
<dbReference type="PIRSF" id="PIRSF028732">
    <property type="entry name" value="Alba"/>
    <property type="match status" value="1"/>
</dbReference>
<dbReference type="SUPFAM" id="SSF82704">
    <property type="entry name" value="AlbA-like"/>
    <property type="match status" value="1"/>
</dbReference>
<reference key="1">
    <citation type="journal article" date="2002" name="Proc. Natl. Acad. Sci. U.S.A.">
        <title>Genome sequence of the hyperthermophilic crenarchaeon Pyrobaculum aerophilum.</title>
        <authorList>
            <person name="Fitz-Gibbon S.T."/>
            <person name="Ladner H."/>
            <person name="Kim U.-J."/>
            <person name="Stetter K.O."/>
            <person name="Simon M.I."/>
            <person name="Miller J.H."/>
        </authorList>
    </citation>
    <scope>NUCLEOTIDE SEQUENCE [LARGE SCALE GENOMIC DNA]</scope>
    <source>
        <strain>ATCC 51768 / DSM 7523 / JCM 9630 / CIP 104966 / NBRC 100827 / IM2</strain>
    </source>
</reference>
<organism>
    <name type="scientific">Pyrobaculum aerophilum (strain ATCC 51768 / DSM 7523 / JCM 9630 / CIP 104966 / NBRC 100827 / IM2)</name>
    <dbReference type="NCBI Taxonomy" id="178306"/>
    <lineage>
        <taxon>Archaea</taxon>
        <taxon>Thermoproteota</taxon>
        <taxon>Thermoprotei</taxon>
        <taxon>Thermoproteales</taxon>
        <taxon>Thermoproteaceae</taxon>
        <taxon>Pyrobaculum</taxon>
    </lineage>
</organism>
<feature type="chain" id="PRO_0000151705" description="DNA/RNA-binding protein Alba">
    <location>
        <begin position="1"/>
        <end position="92"/>
    </location>
</feature>
<feature type="modified residue" description="N6-acetyllysine" evidence="1">
    <location>
        <position position="11"/>
    </location>
</feature>
<gene>
    <name evidence="1" type="primary">albA</name>
    <name type="ordered locus">PAE2226</name>
</gene>
<proteinExistence type="inferred from homology"/>
<evidence type="ECO:0000255" key="1">
    <source>
        <dbReference type="HAMAP-Rule" id="MF_01122"/>
    </source>
</evidence>